<proteinExistence type="uncertain"/>
<reference key="1">
    <citation type="journal article" date="1992" name="J. Gen. Virol.">
        <title>Analysis of a 9.6 kb sequence from the 3' end of canine coronavirus genomic RNA.</title>
        <authorList>
            <person name="Horsburgh B.C."/>
            <person name="Brierley I."/>
            <person name="Brown T.D.K."/>
        </authorList>
    </citation>
    <scope>NUCLEOTIDE SEQUENCE [GENOMIC RNA]</scope>
</reference>
<organism>
    <name type="scientific">Canine coronavirus (strain Insavc-1)</name>
    <name type="common">CCoV</name>
    <name type="synonym">Canine enteric coronavirus</name>
    <dbReference type="NCBI Taxonomy" id="36391"/>
    <lineage>
        <taxon>Viruses</taxon>
        <taxon>Riboviria</taxon>
        <taxon>Orthornavirae</taxon>
        <taxon>Pisuviricota</taxon>
        <taxon>Pisoniviricetes</taxon>
        <taxon>Nidovirales</taxon>
        <taxon>Cornidovirineae</taxon>
        <taxon>Coronaviridae</taxon>
        <taxon>Orthocoronavirinae</taxon>
        <taxon>Alphacoronavirus</taxon>
        <taxon>Tegacovirus</taxon>
        <taxon>Alphacoronavirus 1</taxon>
    </lineage>
</organism>
<name>NS3B_CVCAI</name>
<sequence>MIGGLFLNTLSFVIVSNHVIVNNTANVHHTQ</sequence>
<comment type="similarity">
    <text evidence="1">Belongs to the coronaviruses NS3b protein family.</text>
</comment>
<comment type="caution">
    <text evidence="1">Could be the product of a pseudogene.</text>
</comment>
<evidence type="ECO:0000305" key="1"/>
<feature type="chain" id="PRO_0000106078" description="Putative truncated non-structural protein 3b">
    <location>
        <begin position="1"/>
        <end position="31"/>
    </location>
</feature>
<gene>
    <name type="ORF">3b</name>
</gene>
<accession>P36695</accession>
<organismHost>
    <name type="scientific">Canis lupus familiaris</name>
    <name type="common">Dog</name>
    <name type="synonym">Canis familiaris</name>
    <dbReference type="NCBI Taxonomy" id="9615"/>
</organismHost>
<protein>
    <recommendedName>
        <fullName>Putative truncated non-structural protein 3b</fullName>
        <shortName>ns3b</shortName>
    </recommendedName>
    <alternativeName>
        <fullName>Accessory protein 3b</fullName>
    </alternativeName>
</protein>
<dbReference type="EMBL" id="D13096">
    <property type="protein sequence ID" value="BAA02411.1"/>
    <property type="molecule type" value="Genomic_RNA"/>
</dbReference>